<accession>P15848</accession>
<accession>B2RC20</accession>
<accession>Q8N322</accession>
<accession>Q9UDI9</accession>
<organism>
    <name type="scientific">Homo sapiens</name>
    <name type="common">Human</name>
    <dbReference type="NCBI Taxonomy" id="9606"/>
    <lineage>
        <taxon>Eukaryota</taxon>
        <taxon>Metazoa</taxon>
        <taxon>Chordata</taxon>
        <taxon>Craniata</taxon>
        <taxon>Vertebrata</taxon>
        <taxon>Euteleostomi</taxon>
        <taxon>Mammalia</taxon>
        <taxon>Eutheria</taxon>
        <taxon>Euarchontoglires</taxon>
        <taxon>Primates</taxon>
        <taxon>Haplorrhini</taxon>
        <taxon>Catarrhini</taxon>
        <taxon>Hominidae</taxon>
        <taxon>Homo</taxon>
    </lineage>
</organism>
<name>ARSB_HUMAN</name>
<sequence>MGPRGAASLPRGPGPRRLLLPVVLPLLLLLLLAPPGSGAGASRPPHLVFLLADDLGWNDVGFHGSRIRTPHLDALAAGGVLLDNYYTQPLCTPSRSQLLTGRYQIRTGLQHQIIWPCQPSCVPLDEKLLPQLLKEAGYTTHMVGKWHLGMYRKECLPTRRGFDTYFGYLLGSEDYYSHERCTLIDALNVTRCALDFRDGEEVATGYKNMYSTNIFTKRAIALITNHPPEKPLFLYLALQSVHEPLQVPEEYLKPYDFIQDKNRHHYAGMVSLMDEAVGNVTAALKSSGLWNNTVFIFSTDNGGQTLAGGNNWPLRGRKWSLWEGGVRGVGFVASPLLKQKGVKNRELIHISDWLPTLVKLARGHTNGTKPLDGFDVWKTISEGSPSPRIELLHNIDPNFVDSSPCPRNSMAPAKDDSSLPEYSAFNTSVHAAIRHGNWKLLTGYPGCGYWFPPPSQYNVSEIPSSDPPTKTLWLFDIDRDPEERHDLSREYPHIVTKLLSRLQFYHKHSVPVYFPAQDPRCDPKATGVWGPWM</sequence>
<comment type="function">
    <text evidence="3 16">Removes sulfate groups from chondroitin-4-sulfate (C4S) and regulates its degradation (PubMed:19306108). Involved in the regulation of cell adhesion, cell migration and invasion in colonic epithelium (PubMed:19306108). In the central nervous system, is a regulator of neurite outgrowth and neuronal plasticity, acting through the control of sulfate glycosaminoglycans and neurocan levels (By similarity).</text>
</comment>
<comment type="catalytic activity">
    <reaction>
        <text>Hydrolysis of the 4-sulfate groups of the N-acetyl-D-galactosamine 4-sulfate units of chondroitin sulfate and dermatan sulfate.</text>
        <dbReference type="EC" id="3.1.6.12"/>
    </reaction>
</comment>
<comment type="cofactor">
    <cofactor>
        <name>Ca(2+)</name>
        <dbReference type="ChEBI" id="CHEBI:29108"/>
    </cofactor>
    <text>Binds 1 Ca(2+) ion per subunit.</text>
</comment>
<comment type="activity regulation">
    <text evidence="3">Inhibited by ethanol (By similarity).</text>
</comment>
<comment type="subunit">
    <text>Monomer.</text>
</comment>
<comment type="subcellular location">
    <subcellularLocation>
        <location evidence="2">Lysosome</location>
    </subcellularLocation>
    <subcellularLocation>
        <location evidence="2">Cell surface</location>
    </subcellularLocation>
</comment>
<comment type="alternative products">
    <event type="alternative splicing"/>
    <isoform>
        <id>P15848-1</id>
        <name>1</name>
        <sequence type="displayed"/>
    </isoform>
    <isoform>
        <id>P15848-2</id>
        <name>2</name>
        <sequence type="described" ref="VSP_042721"/>
    </isoform>
</comment>
<comment type="PTM">
    <text evidence="17">The conversion to 3-oxoalanine (also known as C-formylglycine, FGly), of a serine or cysteine residue in prokaryotes and of a cysteine residue in eukaryotes, is critical for catalytic activity. This post-translational modification is severely defective in multiple sulfatase deficiency (MSD).</text>
</comment>
<comment type="disease" evidence="5 7 8 10 12 13 15 19 20 21 22">
    <disease id="DI-00780">
        <name>Mucopolysaccharidosis 6</name>
        <acronym>MPS6</acronym>
        <description>A form of mucopolysaccharidosis, a group of lysosomal storage diseases characterized by defective degradation of glycosaminoglycans, resulting in their excessive accumulation and secretion. The diseases are progressive and often display a wide spectrum of clinical severity. MPS6 is an autosomal recessive form characterized by intracellular accumulation of dermatan sulfate. Clinical features can include abnormal growth, short stature, stiff joints, skeletal malformations, corneal clouding, hepatosplenomegaly, and cardiac abnormalities.</description>
        <dbReference type="MIM" id="253200"/>
    </disease>
    <text>The disease is caused by variants affecting the gene represented in this entry.</text>
</comment>
<comment type="disease" evidence="11">
    <disease id="DI-00791">
        <name>Multiple sulfatase deficiency</name>
        <acronym>MSD</acronym>
        <description>A clinically and biochemically heterogeneous disorder caused by the simultaneous impairment of all sulfatases, due to defective post-translational modification and activation. It combines features of individual sulfatase deficiencies such as metachromatic leukodystrophy, mucopolysaccharidosis, chondrodysplasia punctata, hydrocephalus, ichthyosis, neurologic deterioration and developmental delay.</description>
        <dbReference type="MIM" id="272200"/>
    </disease>
    <text>The protein represented in this entry is involved in disease pathogenesis. Arylsulfatase B activity is impaired in multiple sulfatase deficiency due to mutations in SUMF1. SUMF1 mutations result in defective post-translational modification of ARSB at residue Cys-91 that is not converted to 3-oxoalanine.</text>
</comment>
<comment type="similarity">
    <text evidence="25">Belongs to the sulfatase family.</text>
</comment>
<evidence type="ECO:0000250" key="1"/>
<evidence type="ECO:0000250" key="2">
    <source>
        <dbReference type="UniProtKB" id="P50429"/>
    </source>
</evidence>
<evidence type="ECO:0000250" key="3">
    <source>
        <dbReference type="UniProtKB" id="P50430"/>
    </source>
</evidence>
<evidence type="ECO:0000255" key="4"/>
<evidence type="ECO:0000269" key="5">
    <source>
    </source>
</evidence>
<evidence type="ECO:0000269" key="6">
    <source>
    </source>
</evidence>
<evidence type="ECO:0000269" key="7">
    <source>
    </source>
</evidence>
<evidence type="ECO:0000269" key="8">
    <source>
    </source>
</evidence>
<evidence type="ECO:0000269" key="9">
    <source>
    </source>
</evidence>
<evidence type="ECO:0000269" key="10">
    <source>
    </source>
</evidence>
<evidence type="ECO:0000269" key="11">
    <source>
    </source>
</evidence>
<evidence type="ECO:0000269" key="12">
    <source>
    </source>
</evidence>
<evidence type="ECO:0000269" key="13">
    <source>
    </source>
</evidence>
<evidence type="ECO:0000269" key="14">
    <source>
    </source>
</evidence>
<evidence type="ECO:0000269" key="15">
    <source>
    </source>
</evidence>
<evidence type="ECO:0000269" key="16">
    <source>
    </source>
</evidence>
<evidence type="ECO:0000269" key="17">
    <source>
    </source>
</evidence>
<evidence type="ECO:0000269" key="18">
    <source>
    </source>
</evidence>
<evidence type="ECO:0000269" key="19">
    <source>
    </source>
</evidence>
<evidence type="ECO:0000269" key="20">
    <source>
    </source>
</evidence>
<evidence type="ECO:0000269" key="21">
    <source>
    </source>
</evidence>
<evidence type="ECO:0000269" key="22">
    <source>
    </source>
</evidence>
<evidence type="ECO:0000269" key="23">
    <source>
    </source>
</evidence>
<evidence type="ECO:0000303" key="24">
    <source>
    </source>
</evidence>
<evidence type="ECO:0000305" key="25"/>
<evidence type="ECO:0007829" key="26">
    <source>
        <dbReference type="PDB" id="1FSU"/>
    </source>
</evidence>
<keyword id="KW-0002">3D-structure</keyword>
<keyword id="KW-0025">Alternative splicing</keyword>
<keyword id="KW-0106">Calcium</keyword>
<keyword id="KW-0903">Direct protein sequencing</keyword>
<keyword id="KW-0225">Disease variant</keyword>
<keyword id="KW-1015">Disulfide bond</keyword>
<keyword id="KW-0325">Glycoprotein</keyword>
<keyword id="KW-0378">Hydrolase</keyword>
<keyword id="KW-0977">Ichthyosis</keyword>
<keyword id="KW-1026">Leukodystrophy</keyword>
<keyword id="KW-0458">Lysosome</keyword>
<keyword id="KW-0478">Metachromatic leukodystrophy</keyword>
<keyword id="KW-0479">Metal-binding</keyword>
<keyword id="KW-0510">Mucopolysaccharidosis</keyword>
<keyword id="KW-1267">Proteomics identification</keyword>
<keyword id="KW-1185">Reference proteome</keyword>
<keyword id="KW-0732">Signal</keyword>
<gene>
    <name type="primary">ARSB</name>
</gene>
<dbReference type="EC" id="3.1.6.12"/>
<dbReference type="EMBL" id="J05225">
    <property type="protein sequence ID" value="AAA51784.1"/>
    <property type="molecule type" value="mRNA"/>
</dbReference>
<dbReference type="EMBL" id="M32373">
    <property type="protein sequence ID" value="AAA51779.1"/>
    <property type="molecule type" value="mRNA"/>
</dbReference>
<dbReference type="EMBL" id="X72735">
    <property type="protein sequence ID" value="CAA51272.1"/>
    <property type="molecule type" value="Genomic_DNA"/>
</dbReference>
<dbReference type="EMBL" id="X72736">
    <property type="protein sequence ID" value="CAA51272.1"/>
    <property type="status" value="JOINED"/>
    <property type="molecule type" value="Genomic_DNA"/>
</dbReference>
<dbReference type="EMBL" id="X72737">
    <property type="protein sequence ID" value="CAA51272.1"/>
    <property type="status" value="JOINED"/>
    <property type="molecule type" value="Genomic_DNA"/>
</dbReference>
<dbReference type="EMBL" id="X72738">
    <property type="protein sequence ID" value="CAA51272.1"/>
    <property type="status" value="JOINED"/>
    <property type="molecule type" value="Genomic_DNA"/>
</dbReference>
<dbReference type="EMBL" id="X72739">
    <property type="protein sequence ID" value="CAA51272.1"/>
    <property type="status" value="JOINED"/>
    <property type="molecule type" value="Genomic_DNA"/>
</dbReference>
<dbReference type="EMBL" id="X72740">
    <property type="protein sequence ID" value="CAA51272.1"/>
    <property type="status" value="JOINED"/>
    <property type="molecule type" value="Genomic_DNA"/>
</dbReference>
<dbReference type="EMBL" id="X72741">
    <property type="protein sequence ID" value="CAA51272.1"/>
    <property type="status" value="JOINED"/>
    <property type="molecule type" value="Genomic_DNA"/>
</dbReference>
<dbReference type="EMBL" id="X72742">
    <property type="protein sequence ID" value="CAA51272.1"/>
    <property type="status" value="JOINED"/>
    <property type="molecule type" value="Genomic_DNA"/>
</dbReference>
<dbReference type="EMBL" id="AK314903">
    <property type="protein sequence ID" value="BAG37417.1"/>
    <property type="molecule type" value="mRNA"/>
</dbReference>
<dbReference type="EMBL" id="AC020937">
    <property type="status" value="NOT_ANNOTATED_CDS"/>
    <property type="molecule type" value="Genomic_DNA"/>
</dbReference>
<dbReference type="EMBL" id="AC025755">
    <property type="status" value="NOT_ANNOTATED_CDS"/>
    <property type="molecule type" value="Genomic_DNA"/>
</dbReference>
<dbReference type="EMBL" id="AC099485">
    <property type="status" value="NOT_ANNOTATED_CDS"/>
    <property type="molecule type" value="Genomic_DNA"/>
</dbReference>
<dbReference type="EMBL" id="AC114963">
    <property type="status" value="NOT_ANNOTATED_CDS"/>
    <property type="molecule type" value="Genomic_DNA"/>
</dbReference>
<dbReference type="EMBL" id="CH471084">
    <property type="protein sequence ID" value="EAW95822.1"/>
    <property type="molecule type" value="Genomic_DNA"/>
</dbReference>
<dbReference type="EMBL" id="BC029051">
    <property type="protein sequence ID" value="AAH29051.1"/>
    <property type="molecule type" value="mRNA"/>
</dbReference>
<dbReference type="EMBL" id="S57777">
    <property type="protein sequence ID" value="AAB19988.1"/>
    <property type="molecule type" value="Genomic_DNA"/>
</dbReference>
<dbReference type="CCDS" id="CCDS4043.1">
    <molecule id="P15848-1"/>
</dbReference>
<dbReference type="CCDS" id="CCDS43334.1">
    <molecule id="P15848-2"/>
</dbReference>
<dbReference type="PIR" id="S35990">
    <property type="entry name" value="KJHUAB"/>
</dbReference>
<dbReference type="RefSeq" id="NP_000037.2">
    <molecule id="P15848-1"/>
    <property type="nucleotide sequence ID" value="NM_000046.3"/>
</dbReference>
<dbReference type="RefSeq" id="NP_942002.1">
    <molecule id="P15848-2"/>
    <property type="nucleotide sequence ID" value="NM_198709.3"/>
</dbReference>
<dbReference type="RefSeq" id="XP_011541692.1">
    <molecule id="P15848-1"/>
    <property type="nucleotide sequence ID" value="XM_011543390.2"/>
</dbReference>
<dbReference type="PDB" id="1FSU">
    <property type="method" value="X-ray"/>
    <property type="resolution" value="2.50 A"/>
    <property type="chains" value="A=42-533"/>
</dbReference>
<dbReference type="PDBsum" id="1FSU"/>
<dbReference type="SMR" id="P15848"/>
<dbReference type="BioGRID" id="106904">
    <property type="interactions" value="45"/>
</dbReference>
<dbReference type="FunCoup" id="P15848">
    <property type="interactions" value="472"/>
</dbReference>
<dbReference type="IntAct" id="P15848">
    <property type="interactions" value="35"/>
</dbReference>
<dbReference type="STRING" id="9606.ENSP00000264914"/>
<dbReference type="ChEMBL" id="CHEMBL2399"/>
<dbReference type="DrugBank" id="DB09301">
    <property type="generic name" value="Chondroitin sulfate"/>
</dbReference>
<dbReference type="GlyConnect" id="1016">
    <property type="glycosylation" value="3 N-Linked glycans (3 sites)"/>
</dbReference>
<dbReference type="GlyCosmos" id="P15848">
    <property type="glycosylation" value="7 sites, 4 glycans"/>
</dbReference>
<dbReference type="GlyGen" id="P15848">
    <property type="glycosylation" value="7 sites, 17 N-linked glycans (4 sites), 1 O-linked glycan (1 site)"/>
</dbReference>
<dbReference type="iPTMnet" id="P15848"/>
<dbReference type="PhosphoSitePlus" id="P15848"/>
<dbReference type="BioMuta" id="ARSB"/>
<dbReference type="jPOST" id="P15848"/>
<dbReference type="MassIVE" id="P15848"/>
<dbReference type="PaxDb" id="9606-ENSP00000264914"/>
<dbReference type="PeptideAtlas" id="P15848"/>
<dbReference type="ProteomicsDB" id="53228">
    <molecule id="P15848-1"/>
</dbReference>
<dbReference type="ProteomicsDB" id="53229">
    <molecule id="P15848-2"/>
</dbReference>
<dbReference type="Pumba" id="P15848"/>
<dbReference type="Antibodypedia" id="24535">
    <property type="antibodies" value="316 antibodies from 36 providers"/>
</dbReference>
<dbReference type="DNASU" id="411"/>
<dbReference type="Ensembl" id="ENST00000264914.10">
    <molecule id="P15848-1"/>
    <property type="protein sequence ID" value="ENSP00000264914.4"/>
    <property type="gene ID" value="ENSG00000113273.17"/>
</dbReference>
<dbReference type="Ensembl" id="ENST00000396151.7">
    <molecule id="P15848-2"/>
    <property type="protein sequence ID" value="ENSP00000379455.3"/>
    <property type="gene ID" value="ENSG00000113273.17"/>
</dbReference>
<dbReference type="GeneID" id="411"/>
<dbReference type="KEGG" id="hsa:411"/>
<dbReference type="MANE-Select" id="ENST00000264914.10">
    <property type="protein sequence ID" value="ENSP00000264914.4"/>
    <property type="RefSeq nucleotide sequence ID" value="NM_000046.5"/>
    <property type="RefSeq protein sequence ID" value="NP_000037.2"/>
</dbReference>
<dbReference type="UCSC" id="uc003kfq.5">
    <molecule id="P15848-1"/>
    <property type="organism name" value="human"/>
</dbReference>
<dbReference type="AGR" id="HGNC:714"/>
<dbReference type="CTD" id="411"/>
<dbReference type="DisGeNET" id="411"/>
<dbReference type="GeneCards" id="ARSB"/>
<dbReference type="HGNC" id="HGNC:714">
    <property type="gene designation" value="ARSB"/>
</dbReference>
<dbReference type="HPA" id="ENSG00000113273">
    <property type="expression patterns" value="Low tissue specificity"/>
</dbReference>
<dbReference type="MalaCards" id="ARSB"/>
<dbReference type="MIM" id="253200">
    <property type="type" value="phenotype"/>
</dbReference>
<dbReference type="MIM" id="272200">
    <property type="type" value="phenotype"/>
</dbReference>
<dbReference type="MIM" id="611542">
    <property type="type" value="gene"/>
</dbReference>
<dbReference type="neXtProt" id="NX_P15848"/>
<dbReference type="OpenTargets" id="ENSG00000113273"/>
<dbReference type="Orphanet" id="276212">
    <property type="disease" value="Mucopolysaccharidosis type 6, rapidly progressing"/>
</dbReference>
<dbReference type="Orphanet" id="276223">
    <property type="disease" value="Mucopolysaccharidosis type 6, slowly progressing"/>
</dbReference>
<dbReference type="PharmGKB" id="PA25006"/>
<dbReference type="VEuPathDB" id="HostDB:ENSG00000113273"/>
<dbReference type="eggNOG" id="KOG3867">
    <property type="taxonomic scope" value="Eukaryota"/>
</dbReference>
<dbReference type="GeneTree" id="ENSGT00940000158270"/>
<dbReference type="HOGENOM" id="CLU_006332_10_1_1"/>
<dbReference type="InParanoid" id="P15848"/>
<dbReference type="OMA" id="HEHCVFI"/>
<dbReference type="OrthoDB" id="103349at2759"/>
<dbReference type="PAN-GO" id="P15848">
    <property type="GO annotations" value="0 GO annotations based on evolutionary models"/>
</dbReference>
<dbReference type="PhylomeDB" id="P15848"/>
<dbReference type="TreeFam" id="TF314186"/>
<dbReference type="BioCyc" id="MetaCyc:HS03665-MONOMER"/>
<dbReference type="BRENDA" id="3.1.6.1">
    <property type="organism ID" value="2681"/>
</dbReference>
<dbReference type="BRENDA" id="3.1.6.12">
    <property type="organism ID" value="2681"/>
</dbReference>
<dbReference type="PathwayCommons" id="P15848"/>
<dbReference type="Reactome" id="R-HSA-1663150">
    <property type="pathway name" value="The activation of arylsulfatases"/>
</dbReference>
<dbReference type="Reactome" id="R-HSA-2024101">
    <property type="pathway name" value="CS/DS degradation"/>
</dbReference>
<dbReference type="Reactome" id="R-HSA-2206285">
    <property type="pathway name" value="MPS VI - Maroteaux-Lamy syndrome"/>
</dbReference>
<dbReference type="Reactome" id="R-HSA-6798695">
    <property type="pathway name" value="Neutrophil degranulation"/>
</dbReference>
<dbReference type="Reactome" id="R-HSA-9840310">
    <property type="pathway name" value="Glycosphingolipid catabolism"/>
</dbReference>
<dbReference type="SABIO-RK" id="P15848"/>
<dbReference type="SignaLink" id="P15848"/>
<dbReference type="BioGRID-ORCS" id="411">
    <property type="hits" value="17 hits in 1161 CRISPR screens"/>
</dbReference>
<dbReference type="ChiTaRS" id="ARSB">
    <property type="organism name" value="human"/>
</dbReference>
<dbReference type="EvolutionaryTrace" id="P15848"/>
<dbReference type="GenomeRNAi" id="411"/>
<dbReference type="Pharos" id="P15848">
    <property type="development level" value="Tbio"/>
</dbReference>
<dbReference type="PRO" id="PR:P15848"/>
<dbReference type="Proteomes" id="UP000005640">
    <property type="component" value="Chromosome 5"/>
</dbReference>
<dbReference type="RNAct" id="P15848">
    <property type="molecule type" value="protein"/>
</dbReference>
<dbReference type="Bgee" id="ENSG00000113273">
    <property type="expression patterns" value="Expressed in calcaneal tendon and 120 other cell types or tissues"/>
</dbReference>
<dbReference type="ExpressionAtlas" id="P15848">
    <property type="expression patterns" value="baseline and differential"/>
</dbReference>
<dbReference type="GO" id="GO:0035578">
    <property type="term" value="C:azurophil granule lumen"/>
    <property type="evidence" value="ECO:0000304"/>
    <property type="project" value="Reactome"/>
</dbReference>
<dbReference type="GO" id="GO:0009986">
    <property type="term" value="C:cell surface"/>
    <property type="evidence" value="ECO:0000250"/>
    <property type="project" value="UniProtKB"/>
</dbReference>
<dbReference type="GO" id="GO:0005788">
    <property type="term" value="C:endoplasmic reticulum lumen"/>
    <property type="evidence" value="ECO:0000304"/>
    <property type="project" value="Reactome"/>
</dbReference>
<dbReference type="GO" id="GO:0070062">
    <property type="term" value="C:extracellular exosome"/>
    <property type="evidence" value="ECO:0007005"/>
    <property type="project" value="UniProtKB"/>
</dbReference>
<dbReference type="GO" id="GO:0005576">
    <property type="term" value="C:extracellular region"/>
    <property type="evidence" value="ECO:0000304"/>
    <property type="project" value="Reactome"/>
</dbReference>
<dbReference type="GO" id="GO:1904813">
    <property type="term" value="C:ficolin-1-rich granule lumen"/>
    <property type="evidence" value="ECO:0000304"/>
    <property type="project" value="Reactome"/>
</dbReference>
<dbReference type="GO" id="GO:0043202">
    <property type="term" value="C:lysosomal lumen"/>
    <property type="evidence" value="ECO:0000304"/>
    <property type="project" value="Reactome"/>
</dbReference>
<dbReference type="GO" id="GO:0005764">
    <property type="term" value="C:lysosome"/>
    <property type="evidence" value="ECO:0000304"/>
    <property type="project" value="ProtInc"/>
</dbReference>
<dbReference type="GO" id="GO:0004065">
    <property type="term" value="F:arylsulfatase activity"/>
    <property type="evidence" value="ECO:0000304"/>
    <property type="project" value="ProtInc"/>
</dbReference>
<dbReference type="GO" id="GO:0046872">
    <property type="term" value="F:metal ion binding"/>
    <property type="evidence" value="ECO:0007669"/>
    <property type="project" value="UniProtKB-KW"/>
</dbReference>
<dbReference type="GO" id="GO:0003943">
    <property type="term" value="F:N-acetylgalactosamine-4-sulfatase activity"/>
    <property type="evidence" value="ECO:0000314"/>
    <property type="project" value="UniProtKB"/>
</dbReference>
<dbReference type="GO" id="GO:0006914">
    <property type="term" value="P:autophagy"/>
    <property type="evidence" value="ECO:0007669"/>
    <property type="project" value="Ensembl"/>
</dbReference>
<dbReference type="GO" id="GO:0061580">
    <property type="term" value="P:colon epithelial cell migration"/>
    <property type="evidence" value="ECO:0000315"/>
    <property type="project" value="UniProtKB"/>
</dbReference>
<dbReference type="GO" id="GO:0007041">
    <property type="term" value="P:lysosomal transport"/>
    <property type="evidence" value="ECO:0000304"/>
    <property type="project" value="ProtInc"/>
</dbReference>
<dbReference type="GO" id="GO:0007040">
    <property type="term" value="P:lysosome organization"/>
    <property type="evidence" value="ECO:0000304"/>
    <property type="project" value="ProtInc"/>
</dbReference>
<dbReference type="GO" id="GO:0010976">
    <property type="term" value="P:positive regulation of neuron projection development"/>
    <property type="evidence" value="ECO:0000250"/>
    <property type="project" value="UniProtKB"/>
</dbReference>
<dbReference type="GO" id="GO:0010632">
    <property type="term" value="P:regulation of epithelial cell migration"/>
    <property type="evidence" value="ECO:0000315"/>
    <property type="project" value="UniProtKB"/>
</dbReference>
<dbReference type="GO" id="GO:0043627">
    <property type="term" value="P:response to estrogen"/>
    <property type="evidence" value="ECO:0007669"/>
    <property type="project" value="Ensembl"/>
</dbReference>
<dbReference type="GO" id="GO:0051597">
    <property type="term" value="P:response to methylmercury"/>
    <property type="evidence" value="ECO:0007669"/>
    <property type="project" value="Ensembl"/>
</dbReference>
<dbReference type="GO" id="GO:0007584">
    <property type="term" value="P:response to nutrient"/>
    <property type="evidence" value="ECO:0007669"/>
    <property type="project" value="Ensembl"/>
</dbReference>
<dbReference type="GO" id="GO:0009268">
    <property type="term" value="P:response to pH"/>
    <property type="evidence" value="ECO:0007669"/>
    <property type="project" value="Ensembl"/>
</dbReference>
<dbReference type="CDD" id="cd16029">
    <property type="entry name" value="4-S"/>
    <property type="match status" value="1"/>
</dbReference>
<dbReference type="DisProt" id="DP02670"/>
<dbReference type="FunFam" id="3.30.1120.10:FF:000002">
    <property type="entry name" value="Arylsulfatase family member J"/>
    <property type="match status" value="1"/>
</dbReference>
<dbReference type="FunFam" id="3.40.720.10:FF:000007">
    <property type="entry name" value="Arylsulfatase family, member J"/>
    <property type="match status" value="1"/>
</dbReference>
<dbReference type="Gene3D" id="3.30.1120.10">
    <property type="match status" value="1"/>
</dbReference>
<dbReference type="Gene3D" id="3.40.720.10">
    <property type="entry name" value="Alkaline Phosphatase, subunit A"/>
    <property type="match status" value="1"/>
</dbReference>
<dbReference type="InterPro" id="IPR017850">
    <property type="entry name" value="Alkaline_phosphatase_core_sf"/>
</dbReference>
<dbReference type="InterPro" id="IPR047115">
    <property type="entry name" value="ARSB"/>
</dbReference>
<dbReference type="InterPro" id="IPR024607">
    <property type="entry name" value="Sulfatase_CS"/>
</dbReference>
<dbReference type="InterPro" id="IPR000917">
    <property type="entry name" value="Sulfatase_N"/>
</dbReference>
<dbReference type="PANTHER" id="PTHR10342">
    <property type="entry name" value="ARYLSULFATASE"/>
    <property type="match status" value="1"/>
</dbReference>
<dbReference type="PANTHER" id="PTHR10342:SF274">
    <property type="entry name" value="ARYLSULFATASE B"/>
    <property type="match status" value="1"/>
</dbReference>
<dbReference type="Pfam" id="PF00884">
    <property type="entry name" value="Sulfatase"/>
    <property type="match status" value="1"/>
</dbReference>
<dbReference type="SUPFAM" id="SSF53649">
    <property type="entry name" value="Alkaline phosphatase-like"/>
    <property type="match status" value="1"/>
</dbReference>
<dbReference type="PROSITE" id="PS00523">
    <property type="entry name" value="SULFATASE_1"/>
    <property type="match status" value="1"/>
</dbReference>
<dbReference type="PROSITE" id="PS00149">
    <property type="entry name" value="SULFATASE_2"/>
    <property type="match status" value="1"/>
</dbReference>
<proteinExistence type="evidence at protein level"/>
<protein>
    <recommendedName>
        <fullName>Arylsulfatase B</fullName>
        <shortName>ASB</shortName>
        <ecNumber>3.1.6.12</ecNumber>
    </recommendedName>
    <alternativeName>
        <fullName>N-acetylgalactosamine-4-sulfatase</fullName>
        <shortName>G4S</shortName>
    </alternativeName>
</protein>
<feature type="signal peptide" description="Or 38" evidence="4">
    <location>
        <begin position="1"/>
        <end position="36"/>
    </location>
</feature>
<feature type="chain" id="PRO_0000033421" description="Arylsulfatase B">
    <location>
        <begin position="37"/>
        <end position="533"/>
    </location>
</feature>
<feature type="active site" description="Nucleophile" evidence="17">
    <location>
        <position position="91"/>
    </location>
</feature>
<feature type="active site">
    <location>
        <position position="147"/>
    </location>
</feature>
<feature type="binding site">
    <location>
        <position position="53"/>
    </location>
    <ligand>
        <name>Ca(2+)</name>
        <dbReference type="ChEBI" id="CHEBI:29108"/>
    </ligand>
</feature>
<feature type="binding site">
    <location>
        <position position="54"/>
    </location>
    <ligand>
        <name>Ca(2+)</name>
        <dbReference type="ChEBI" id="CHEBI:29108"/>
    </ligand>
</feature>
<feature type="binding site" description="via 3-oxoalanine" evidence="17">
    <location>
        <position position="91"/>
    </location>
    <ligand>
        <name>Ca(2+)</name>
        <dbReference type="ChEBI" id="CHEBI:29108"/>
    </ligand>
</feature>
<feature type="binding site" evidence="1">
    <location>
        <position position="145"/>
    </location>
    <ligand>
        <name>substrate</name>
    </ligand>
</feature>
<feature type="binding site" evidence="1">
    <location>
        <position position="242"/>
    </location>
    <ligand>
        <name>substrate</name>
    </ligand>
</feature>
<feature type="binding site">
    <location>
        <position position="300"/>
    </location>
    <ligand>
        <name>Ca(2+)</name>
        <dbReference type="ChEBI" id="CHEBI:29108"/>
    </ligand>
</feature>
<feature type="binding site">
    <location>
        <position position="301"/>
    </location>
    <ligand>
        <name>Ca(2+)</name>
        <dbReference type="ChEBI" id="CHEBI:29108"/>
    </ligand>
</feature>
<feature type="binding site" evidence="1">
    <location>
        <position position="318"/>
    </location>
    <ligand>
        <name>substrate</name>
    </ligand>
</feature>
<feature type="modified residue" description="3-oxoalanine (Cys)" evidence="17">
    <location>
        <position position="91"/>
    </location>
</feature>
<feature type="glycosylation site" description="N-linked (GlcNAc...) asparagine" evidence="4">
    <location>
        <position position="188"/>
    </location>
</feature>
<feature type="glycosylation site" description="N-linked (GlcNAc...) asparagine">
    <location>
        <position position="279"/>
    </location>
</feature>
<feature type="glycosylation site" description="N-linked (GlcNAc...) asparagine" evidence="25">
    <location>
        <position position="291"/>
    </location>
</feature>
<feature type="glycosylation site" description="N-linked (GlcNAc...) asparagine" evidence="14">
    <location>
        <position position="366"/>
    </location>
</feature>
<feature type="glycosylation site" description="N-linked (GlcNAc...) asparagine">
    <location>
        <position position="426"/>
    </location>
</feature>
<feature type="glycosylation site" description="N-linked (GlcNAc...) asparagine" evidence="4">
    <location>
        <position position="458"/>
    </location>
</feature>
<feature type="disulfide bond">
    <location>
        <begin position="117"/>
        <end position="521"/>
    </location>
</feature>
<feature type="disulfide bond">
    <location>
        <begin position="121"/>
        <end position="155"/>
    </location>
</feature>
<feature type="disulfide bond">
    <location>
        <begin position="181"/>
        <end position="192"/>
    </location>
</feature>
<feature type="disulfide bond">
    <location>
        <begin position="405"/>
        <end position="447"/>
    </location>
</feature>
<feature type="splice variant" id="VSP_042721" description="In isoform 2." evidence="24">
    <original>CPRNSMAPAKDDSSLPEYSAFNTSVHAAIRHGNWKLLTGYPGCGYWFPPPSQYNVSEIPSSDPPTKTLWLFDIDRDPEERHDLSREYPHIVTKLLSRLQFYHKHSVPVYFPAQDPRCDPKATGVWGPWM</original>
    <variation>YWPECSLLL</variation>
    <location>
        <begin position="405"/>
        <end position="533"/>
    </location>
</feature>
<feature type="sequence variant" id="VAR_019017" description="In MPS6; intermediate form; dbSNP:rs1233331806." evidence="5">
    <original>S</original>
    <variation>F</variation>
    <location>
        <position position="65"/>
    </location>
</feature>
<feature type="sequence variant" id="VAR_080270" description="In MPS6; dbSNP:rs749465732." evidence="15">
    <original>L</original>
    <variation>R</variation>
    <location>
        <position position="82"/>
    </location>
</feature>
<feature type="sequence variant" id="VAR_019018" description="In MPS6; severe form; low protein levels and activity; dbSNP:rs969231209." evidence="10">
    <location>
        <position position="86"/>
    </location>
</feature>
<feature type="sequence variant" id="VAR_007294" description="In MPS6; mild form; dbSNP:rs751010538." evidence="22">
    <original>T</original>
    <variation>M</variation>
    <location>
        <position position="92"/>
    </location>
</feature>
<feature type="sequence variant" id="VAR_007295" description="In MPS6; mild/severe form; dbSNP:rs118203942." evidence="22">
    <original>R</original>
    <variation>Q</variation>
    <location>
        <position position="95"/>
    </location>
</feature>
<feature type="sequence variant" id="VAR_019019" description="In MPS6; severe form; dbSNP:rs775780931." evidence="5">
    <original>P</original>
    <variation>H</variation>
    <location>
        <position position="116"/>
    </location>
</feature>
<feature type="sequence variant" id="VAR_007296" description="In MPS6; severe form; dbSNP:rs118203939." evidence="12">
    <original>C</original>
    <variation>R</variation>
    <location>
        <position position="117"/>
    </location>
</feature>
<feature type="sequence variant" id="VAR_007297" description="In MPS6; intermediate form; dbSNP:rs118203938." evidence="13">
    <original>G</original>
    <variation>V</variation>
    <location>
        <position position="137"/>
    </location>
</feature>
<feature type="sequence variant" id="VAR_019020" description="In MPS6; dbSNP:rs1554088053." evidence="21">
    <original>M</original>
    <variation>I</variation>
    <location>
        <position position="142"/>
    </location>
</feature>
<feature type="sequence variant" id="VAR_019021" description="In MPS6; severe form; severe reduction of activity; dbSNP:rs746206847." evidence="19">
    <original>G</original>
    <variation>R</variation>
    <location>
        <position position="144"/>
    </location>
</feature>
<feature type="sequence variant" id="VAR_019022" description="In MPS6; dbSNP:rs1554088034." evidence="21">
    <original>W</original>
    <variation>L</variation>
    <location>
        <position position="146"/>
    </location>
</feature>
<feature type="sequence variant" id="VAR_019023" description="In MPS6; dbSNP:rs1554088037." evidence="21">
    <original>W</original>
    <variation>R</variation>
    <location>
        <position position="146"/>
    </location>
</feature>
<feature type="sequence variant" id="VAR_019024" description="In MPS6; dbSNP:rs1554088034." evidence="21">
    <original>W</original>
    <variation>S</variation>
    <location>
        <position position="146"/>
    </location>
</feature>
<feature type="sequence variant" id="VAR_007298" description="In MPS6; intermediate form; dbSNP:rs991104525." evidence="20">
    <original>R</original>
    <variation>W</variation>
    <location>
        <position position="152"/>
    </location>
</feature>
<feature type="sequence variant" id="VAR_007299" description="In MPS6; intermediate form; dbSNP:rs1196325597." evidence="20">
    <original>R</original>
    <variation>Q</variation>
    <location>
        <position position="160"/>
    </location>
</feature>
<feature type="sequence variant" id="VAR_019025" description="In MPS6; mild form; severe reduction of activity; dbSNP:rs1554087423." evidence="7 8 19">
    <original>C</original>
    <variation>R</variation>
    <location>
        <position position="192"/>
    </location>
</feature>
<feature type="sequence variant" id="VAR_007300" description="In MPS6; mild/intermediate; dbSNP:rs118203943." evidence="10 22">
    <original>Y</original>
    <variation>C</variation>
    <location>
        <position position="210"/>
    </location>
</feature>
<feature type="sequence variant" id="VAR_007301" description="In MPS6; mild form; dbSNP:rs118203940." evidence="10 12">
    <original>L</original>
    <variation>P</variation>
    <location>
        <position position="236"/>
    </location>
</feature>
<feature type="sequence variant" id="VAR_019026" description="In MPS6; dbSNP:rs1554086431." evidence="7 8">
    <original>Q</original>
    <variation>R</variation>
    <location>
        <position position="239"/>
    </location>
</feature>
<feature type="sequence variant" id="VAR_007302" description="In MPS6; severe form; dbSNP:rs779378413." evidence="6">
    <original>G</original>
    <variation>R</variation>
    <location>
        <position position="302"/>
    </location>
</feature>
<feature type="sequence variant" id="VAR_019027" description="In MPS6; severe form; loss of activity; dbSNP:rs759384989." evidence="10">
    <original>W</original>
    <variation>C</variation>
    <location>
        <position position="312"/>
    </location>
</feature>
<feature type="sequence variant" id="VAR_019028" description="In MPS6; intermediate form; dbSNP:rs727503809." evidence="5 10 15">
    <original>R</original>
    <variation>Q</variation>
    <location>
        <position position="315"/>
    </location>
</feature>
<feature type="sequence variant" id="VAR_019029" description="In MPS6; intermediate form; severe reduction of activity; dbSNP:rs1554079320." evidence="10 19">
    <original>L</original>
    <variation>P</variation>
    <location>
        <position position="321"/>
    </location>
</feature>
<feature type="sequence variant" id="VAR_061883" description="In dbSNP:rs1065757.">
    <original>V</original>
    <variation>L</variation>
    <location>
        <position position="358"/>
    </location>
</feature>
<feature type="sequence variant" id="VAR_016061" description="In dbSNP:rs1065757." evidence="5 8 9 10 18 23">
    <original>V</original>
    <variation>M</variation>
    <location>
        <position position="358"/>
    </location>
</feature>
<feature type="sequence variant" id="VAR_007303" description="In dbSNP:rs1071598." evidence="10 13">
    <original>V</original>
    <variation>M</variation>
    <location>
        <position position="376"/>
    </location>
</feature>
<feature type="sequence variant" id="VAR_019030" description="In dbSNP:rs25414." evidence="10 15">
    <original>S</original>
    <variation>N</variation>
    <location>
        <position position="384"/>
    </location>
</feature>
<feature type="sequence variant" id="VAR_007304" description="In MPS6; mild/severe form; dbSNP:rs118203944." evidence="22">
    <original>H</original>
    <variation>P</variation>
    <location>
        <position position="393"/>
    </location>
</feature>
<feature type="sequence variant" id="VAR_019031" description="In MPS6; dbSNP:rs200793396." evidence="8">
    <original>F</original>
    <variation>L</variation>
    <location>
        <position position="399"/>
    </location>
</feature>
<feature type="sequence variant" id="VAR_007305" description="In MPS6; mild form; dbSNP:rs118203941." evidence="12">
    <original>C</original>
    <variation>Y</variation>
    <location>
        <position position="405"/>
    </location>
</feature>
<feature type="sequence variant" id="VAR_019032" description="In MPS6; dbSNP:rs201101343." evidence="10">
    <original>R</original>
    <variation>G</variation>
    <location>
        <position position="484"/>
    </location>
</feature>
<feature type="sequence variant" id="VAR_007306" description="In MPS6; mild/severe form; dbSNP:rs774358117." evidence="22">
    <original>L</original>
    <variation>P</variation>
    <location>
        <position position="498"/>
    </location>
</feature>
<feature type="sequence variant" id="VAR_019033" description="In MPS6; severe form; severe reduction of activity; dbSNP:rs1554069661." evidence="19">
    <original>C</original>
    <variation>Y</variation>
    <location>
        <position position="521"/>
    </location>
</feature>
<feature type="sequence variant" id="VAR_019034" description="In MPS6; mild form; dbSNP:rs1554069659." evidence="5">
    <original>P</original>
    <variation>R</variation>
    <location>
        <position position="531"/>
    </location>
</feature>
<feature type="sequence conflict" description="In Ref. 1; AA sequence." evidence="25" ref="1">
    <original>K</original>
    <variation>F</variation>
    <location>
        <position position="153"/>
    </location>
</feature>
<feature type="sequence conflict" description="In Ref. 1; AA sequence." evidence="25" ref="1">
    <original>NSM</original>
    <variation>SPC</variation>
    <location>
        <begin position="408"/>
        <end position="410"/>
    </location>
</feature>
<feature type="strand" evidence="26">
    <location>
        <begin position="46"/>
        <end position="54"/>
    </location>
</feature>
<feature type="helix" evidence="26">
    <location>
        <begin position="61"/>
        <end position="63"/>
    </location>
</feature>
<feature type="helix" evidence="26">
    <location>
        <begin position="70"/>
        <end position="77"/>
    </location>
</feature>
<feature type="strand" evidence="26">
    <location>
        <begin position="79"/>
        <end position="82"/>
    </location>
</feature>
<feature type="helix" evidence="26">
    <location>
        <begin position="91"/>
        <end position="100"/>
    </location>
</feature>
<feature type="helix" evidence="26">
    <location>
        <begin position="104"/>
        <end position="107"/>
    </location>
</feature>
<feature type="helix" evidence="26">
    <location>
        <begin position="129"/>
        <end position="135"/>
    </location>
</feature>
<feature type="strand" evidence="26">
    <location>
        <begin position="139"/>
        <end position="144"/>
    </location>
</feature>
<feature type="helix" evidence="26">
    <location>
        <begin position="153"/>
        <end position="155"/>
    </location>
</feature>
<feature type="helix" evidence="26">
    <location>
        <begin position="157"/>
        <end position="159"/>
    </location>
</feature>
<feature type="strand" evidence="26">
    <location>
        <begin position="163"/>
        <end position="167"/>
    </location>
</feature>
<feature type="strand" evidence="26">
    <location>
        <begin position="169"/>
        <end position="171"/>
    </location>
</feature>
<feature type="turn" evidence="26">
    <location>
        <begin position="175"/>
        <end position="177"/>
    </location>
</feature>
<feature type="strand" evidence="26">
    <location>
        <begin position="179"/>
        <end position="184"/>
    </location>
</feature>
<feature type="turn" evidence="26">
    <location>
        <begin position="185"/>
        <end position="188"/>
    </location>
</feature>
<feature type="strand" evidence="26">
    <location>
        <begin position="189"/>
        <end position="194"/>
    </location>
</feature>
<feature type="helix" evidence="26">
    <location>
        <begin position="211"/>
        <end position="224"/>
    </location>
</feature>
<feature type="strand" evidence="26">
    <location>
        <begin position="232"/>
        <end position="237"/>
    </location>
</feature>
<feature type="strand" evidence="26">
    <location>
        <begin position="242"/>
        <end position="244"/>
    </location>
</feature>
<feature type="helix" evidence="26">
    <location>
        <begin position="249"/>
        <end position="251"/>
    </location>
</feature>
<feature type="helix" evidence="26">
    <location>
        <begin position="253"/>
        <end position="255"/>
    </location>
</feature>
<feature type="helix" evidence="26">
    <location>
        <begin position="261"/>
        <end position="286"/>
    </location>
</feature>
<feature type="helix" evidence="26">
    <location>
        <begin position="290"/>
        <end position="292"/>
    </location>
</feature>
<feature type="strand" evidence="26">
    <location>
        <begin position="293"/>
        <end position="301"/>
    </location>
</feature>
<feature type="helix" evidence="26">
    <location>
        <begin position="305"/>
        <end position="307"/>
    </location>
</feature>
<feature type="strand" evidence="26">
    <location>
        <begin position="320"/>
        <end position="322"/>
    </location>
</feature>
<feature type="helix" evidence="26">
    <location>
        <begin position="323"/>
        <end position="326"/>
    </location>
</feature>
<feature type="strand" evidence="26">
    <location>
        <begin position="330"/>
        <end position="333"/>
    </location>
</feature>
<feature type="strand" evidence="26">
    <location>
        <begin position="341"/>
        <end position="344"/>
    </location>
</feature>
<feature type="helix" evidence="26">
    <location>
        <begin position="350"/>
        <end position="352"/>
    </location>
</feature>
<feature type="helix" evidence="26">
    <location>
        <begin position="353"/>
        <end position="360"/>
    </location>
</feature>
<feature type="helix" evidence="26">
    <location>
        <begin position="377"/>
        <end position="382"/>
    </location>
</feature>
<feature type="strand" evidence="26">
    <location>
        <begin position="390"/>
        <end position="396"/>
    </location>
</feature>
<feature type="strand" evidence="26">
    <location>
        <begin position="429"/>
        <end position="435"/>
    </location>
</feature>
<feature type="strand" evidence="26">
    <location>
        <begin position="438"/>
        <end position="443"/>
    </location>
</feature>
<feature type="turn" evidence="26">
    <location>
        <begin position="454"/>
        <end position="456"/>
    </location>
</feature>
<feature type="strand" evidence="26">
    <location>
        <begin position="472"/>
        <end position="476"/>
    </location>
</feature>
<feature type="turn" evidence="26">
    <location>
        <begin position="477"/>
        <end position="479"/>
    </location>
</feature>
<feature type="turn" evidence="26">
    <location>
        <begin position="488"/>
        <end position="490"/>
    </location>
</feature>
<feature type="helix" evidence="26">
    <location>
        <begin position="492"/>
        <end position="507"/>
    </location>
</feature>
<feature type="helix" evidence="26">
    <location>
        <begin position="519"/>
        <end position="521"/>
    </location>
</feature>
<feature type="turn" evidence="26">
    <location>
        <begin position="524"/>
        <end position="526"/>
    </location>
</feature>
<reference key="1">
    <citation type="journal article" date="1990" name="J. Biol. Chem.">
        <title>Phylogenetic conservation of arylsulfatases. cDNA cloning and expression of human arylsulfatase B.</title>
        <authorList>
            <person name="Peters C."/>
            <person name="Schmidt B."/>
            <person name="Rommerskirch W."/>
            <person name="Rupp K."/>
            <person name="Zuehlsdorf M."/>
            <person name="Vingron M."/>
            <person name="Meyer H.E."/>
            <person name="Pohlmann R."/>
            <person name="von Figura K."/>
        </authorList>
    </citation>
    <scope>NUCLEOTIDE SEQUENCE [MRNA] (ISOFORM 1)</scope>
    <scope>PROTEIN SEQUENCE OF 103-119; 135-158; 161-168; 286-295; 319-337; 379-387; 389-410; 440-450; 490-501; 508-520 AND 525-533</scope>
    <source>
        <tissue>Placenta</tissue>
        <tissue>Testis</tissue>
    </source>
</reference>
<reference key="2">
    <citation type="journal article" date="1990" name="Genomics">
        <title>Human arylsulfatase B: MOPAC cloning, nucleotide sequence of a full-length cDNA, and regions of amino acid identity with arylsulfatases A and C.</title>
        <authorList>
            <person name="Schuchman E.H."/>
            <person name="Jackson C.E."/>
            <person name="Desnick R.J."/>
        </authorList>
    </citation>
    <scope>NUCLEOTIDE SEQUENCE [MRNA] (ISOFORM 1)</scope>
</reference>
<reference key="3">
    <citation type="journal article" date="1993" name="Biol. Chem. Hoppe-Seyler">
        <title>Structure of the human arylsulfatase B gene.</title>
        <authorList>
            <person name="Modaressi S."/>
            <person name="Rupp K."/>
            <person name="von Figura K."/>
            <person name="Peters C."/>
        </authorList>
    </citation>
    <scope>NUCLEOTIDE SEQUENCE [GENOMIC DNA]</scope>
    <scope>VARIANT MET-358</scope>
</reference>
<reference key="4">
    <citation type="journal article" date="2004" name="Nat. Genet.">
        <title>Complete sequencing and characterization of 21,243 full-length human cDNAs.</title>
        <authorList>
            <person name="Ota T."/>
            <person name="Suzuki Y."/>
            <person name="Nishikawa T."/>
            <person name="Otsuki T."/>
            <person name="Sugiyama T."/>
            <person name="Irie R."/>
            <person name="Wakamatsu A."/>
            <person name="Hayashi K."/>
            <person name="Sato H."/>
            <person name="Nagai K."/>
            <person name="Kimura K."/>
            <person name="Makita H."/>
            <person name="Sekine M."/>
            <person name="Obayashi M."/>
            <person name="Nishi T."/>
            <person name="Shibahara T."/>
            <person name="Tanaka T."/>
            <person name="Ishii S."/>
            <person name="Yamamoto J."/>
            <person name="Saito K."/>
            <person name="Kawai Y."/>
            <person name="Isono Y."/>
            <person name="Nakamura Y."/>
            <person name="Nagahari K."/>
            <person name="Murakami K."/>
            <person name="Yasuda T."/>
            <person name="Iwayanagi T."/>
            <person name="Wagatsuma M."/>
            <person name="Shiratori A."/>
            <person name="Sudo H."/>
            <person name="Hosoiri T."/>
            <person name="Kaku Y."/>
            <person name="Kodaira H."/>
            <person name="Kondo H."/>
            <person name="Sugawara M."/>
            <person name="Takahashi M."/>
            <person name="Kanda K."/>
            <person name="Yokoi T."/>
            <person name="Furuya T."/>
            <person name="Kikkawa E."/>
            <person name="Omura Y."/>
            <person name="Abe K."/>
            <person name="Kamihara K."/>
            <person name="Katsuta N."/>
            <person name="Sato K."/>
            <person name="Tanikawa M."/>
            <person name="Yamazaki M."/>
            <person name="Ninomiya K."/>
            <person name="Ishibashi T."/>
            <person name="Yamashita H."/>
            <person name="Murakawa K."/>
            <person name="Fujimori K."/>
            <person name="Tanai H."/>
            <person name="Kimata M."/>
            <person name="Watanabe M."/>
            <person name="Hiraoka S."/>
            <person name="Chiba Y."/>
            <person name="Ishida S."/>
            <person name="Ono Y."/>
            <person name="Takiguchi S."/>
            <person name="Watanabe S."/>
            <person name="Yosida M."/>
            <person name="Hotuta T."/>
            <person name="Kusano J."/>
            <person name="Kanehori K."/>
            <person name="Takahashi-Fujii A."/>
            <person name="Hara H."/>
            <person name="Tanase T.-O."/>
            <person name="Nomura Y."/>
            <person name="Togiya S."/>
            <person name="Komai F."/>
            <person name="Hara R."/>
            <person name="Takeuchi K."/>
            <person name="Arita M."/>
            <person name="Imose N."/>
            <person name="Musashino K."/>
            <person name="Yuuki H."/>
            <person name="Oshima A."/>
            <person name="Sasaki N."/>
            <person name="Aotsuka S."/>
            <person name="Yoshikawa Y."/>
            <person name="Matsunawa H."/>
            <person name="Ichihara T."/>
            <person name="Shiohata N."/>
            <person name="Sano S."/>
            <person name="Moriya S."/>
            <person name="Momiyama H."/>
            <person name="Satoh N."/>
            <person name="Takami S."/>
            <person name="Terashima Y."/>
            <person name="Suzuki O."/>
            <person name="Nakagawa S."/>
            <person name="Senoh A."/>
            <person name="Mizoguchi H."/>
            <person name="Goto Y."/>
            <person name="Shimizu F."/>
            <person name="Wakebe H."/>
            <person name="Hishigaki H."/>
            <person name="Watanabe T."/>
            <person name="Sugiyama A."/>
            <person name="Takemoto M."/>
            <person name="Kawakami B."/>
            <person name="Yamazaki M."/>
            <person name="Watanabe K."/>
            <person name="Kumagai A."/>
            <person name="Itakura S."/>
            <person name="Fukuzumi Y."/>
            <person name="Fujimori Y."/>
            <person name="Komiyama M."/>
            <person name="Tashiro H."/>
            <person name="Tanigami A."/>
            <person name="Fujiwara T."/>
            <person name="Ono T."/>
            <person name="Yamada K."/>
            <person name="Fujii Y."/>
            <person name="Ozaki K."/>
            <person name="Hirao M."/>
            <person name="Ohmori Y."/>
            <person name="Kawabata A."/>
            <person name="Hikiji T."/>
            <person name="Kobatake N."/>
            <person name="Inagaki H."/>
            <person name="Ikema Y."/>
            <person name="Okamoto S."/>
            <person name="Okitani R."/>
            <person name="Kawakami T."/>
            <person name="Noguchi S."/>
            <person name="Itoh T."/>
            <person name="Shigeta K."/>
            <person name="Senba T."/>
            <person name="Matsumura K."/>
            <person name="Nakajima Y."/>
            <person name="Mizuno T."/>
            <person name="Morinaga M."/>
            <person name="Sasaki M."/>
            <person name="Togashi T."/>
            <person name="Oyama M."/>
            <person name="Hata H."/>
            <person name="Watanabe M."/>
            <person name="Komatsu T."/>
            <person name="Mizushima-Sugano J."/>
            <person name="Satoh T."/>
            <person name="Shirai Y."/>
            <person name="Takahashi Y."/>
            <person name="Nakagawa K."/>
            <person name="Okumura K."/>
            <person name="Nagase T."/>
            <person name="Nomura N."/>
            <person name="Kikuchi H."/>
            <person name="Masuho Y."/>
            <person name="Yamashita R."/>
            <person name="Nakai K."/>
            <person name="Yada T."/>
            <person name="Nakamura Y."/>
            <person name="Ohara O."/>
            <person name="Isogai T."/>
            <person name="Sugano S."/>
        </authorList>
    </citation>
    <scope>NUCLEOTIDE SEQUENCE [LARGE SCALE MRNA] (ISOFORM 1)</scope>
    <scope>VARIANT MET-358</scope>
    <source>
        <tissue>Cerebellum</tissue>
    </source>
</reference>
<reference key="5">
    <citation type="journal article" date="2004" name="Nature">
        <title>The DNA sequence and comparative analysis of human chromosome 5.</title>
        <authorList>
            <person name="Schmutz J."/>
            <person name="Martin J."/>
            <person name="Terry A."/>
            <person name="Couronne O."/>
            <person name="Grimwood J."/>
            <person name="Lowry S."/>
            <person name="Gordon L.A."/>
            <person name="Scott D."/>
            <person name="Xie G."/>
            <person name="Huang W."/>
            <person name="Hellsten U."/>
            <person name="Tran-Gyamfi M."/>
            <person name="She X."/>
            <person name="Prabhakar S."/>
            <person name="Aerts A."/>
            <person name="Altherr M."/>
            <person name="Bajorek E."/>
            <person name="Black S."/>
            <person name="Branscomb E."/>
            <person name="Caoile C."/>
            <person name="Challacombe J.F."/>
            <person name="Chan Y.M."/>
            <person name="Denys M."/>
            <person name="Detter J.C."/>
            <person name="Escobar J."/>
            <person name="Flowers D."/>
            <person name="Fotopulos D."/>
            <person name="Glavina T."/>
            <person name="Gomez M."/>
            <person name="Gonzales E."/>
            <person name="Goodstein D."/>
            <person name="Grigoriev I."/>
            <person name="Groza M."/>
            <person name="Hammon N."/>
            <person name="Hawkins T."/>
            <person name="Haydu L."/>
            <person name="Israni S."/>
            <person name="Jett J."/>
            <person name="Kadner K."/>
            <person name="Kimball H."/>
            <person name="Kobayashi A."/>
            <person name="Lopez F."/>
            <person name="Lou Y."/>
            <person name="Martinez D."/>
            <person name="Medina C."/>
            <person name="Morgan J."/>
            <person name="Nandkeshwar R."/>
            <person name="Noonan J.P."/>
            <person name="Pitluck S."/>
            <person name="Pollard M."/>
            <person name="Predki P."/>
            <person name="Priest J."/>
            <person name="Ramirez L."/>
            <person name="Retterer J."/>
            <person name="Rodriguez A."/>
            <person name="Rogers S."/>
            <person name="Salamov A."/>
            <person name="Salazar A."/>
            <person name="Thayer N."/>
            <person name="Tice H."/>
            <person name="Tsai M."/>
            <person name="Ustaszewska A."/>
            <person name="Vo N."/>
            <person name="Wheeler J."/>
            <person name="Wu K."/>
            <person name="Yang J."/>
            <person name="Dickson M."/>
            <person name="Cheng J.-F."/>
            <person name="Eichler E.E."/>
            <person name="Olsen A."/>
            <person name="Pennacchio L.A."/>
            <person name="Rokhsar D.S."/>
            <person name="Richardson P."/>
            <person name="Lucas S.M."/>
            <person name="Myers R.M."/>
            <person name="Rubin E.M."/>
        </authorList>
    </citation>
    <scope>NUCLEOTIDE SEQUENCE [LARGE SCALE GENOMIC DNA]</scope>
</reference>
<reference key="6">
    <citation type="submission" date="2005-07" db="EMBL/GenBank/DDBJ databases">
        <authorList>
            <person name="Mural R.J."/>
            <person name="Istrail S."/>
            <person name="Sutton G."/>
            <person name="Florea L."/>
            <person name="Halpern A.L."/>
            <person name="Mobarry C.M."/>
            <person name="Lippert R."/>
            <person name="Walenz B."/>
            <person name="Shatkay H."/>
            <person name="Dew I."/>
            <person name="Miller J.R."/>
            <person name="Flanigan M.J."/>
            <person name="Edwards N.J."/>
            <person name="Bolanos R."/>
            <person name="Fasulo D."/>
            <person name="Halldorsson B.V."/>
            <person name="Hannenhalli S."/>
            <person name="Turner R."/>
            <person name="Yooseph S."/>
            <person name="Lu F."/>
            <person name="Nusskern D.R."/>
            <person name="Shue B.C."/>
            <person name="Zheng X.H."/>
            <person name="Zhong F."/>
            <person name="Delcher A.L."/>
            <person name="Huson D.H."/>
            <person name="Kravitz S.A."/>
            <person name="Mouchard L."/>
            <person name="Reinert K."/>
            <person name="Remington K.A."/>
            <person name="Clark A.G."/>
            <person name="Waterman M.S."/>
            <person name="Eichler E.E."/>
            <person name="Adams M.D."/>
            <person name="Hunkapiller M.W."/>
            <person name="Myers E.W."/>
            <person name="Venter J.C."/>
        </authorList>
    </citation>
    <scope>NUCLEOTIDE SEQUENCE [LARGE SCALE GENOMIC DNA]</scope>
</reference>
<reference key="7">
    <citation type="journal article" date="2004" name="Genome Res.">
        <title>The status, quality, and expansion of the NIH full-length cDNA project: the Mammalian Gene Collection (MGC).</title>
        <authorList>
            <consortium name="The MGC Project Team"/>
        </authorList>
    </citation>
    <scope>NUCLEOTIDE SEQUENCE [LARGE SCALE MRNA] (ISOFORM 2)</scope>
    <source>
        <tissue>Colon</tissue>
    </source>
</reference>
<reference key="8">
    <citation type="journal article" date="1991" name="Biochem. Int.">
        <title>Human N-acetylgalactosamine-4-sulphatase: protein maturation and isolation of genomic clones.</title>
        <authorList>
            <person name="Litjens T."/>
            <person name="Morris C.P."/>
            <person name="Gibson G.J."/>
            <person name="Beckmann K.R."/>
            <person name="Hopwood J.J."/>
        </authorList>
    </citation>
    <scope>NUCLEOTIDE SEQUENCE [GENOMIC DNA] OF 1-104</scope>
</reference>
<reference key="9">
    <citation type="journal article" date="1992" name="Biochim. Biophys. Acta">
        <title>Components and proteolytic processing sites of arylsulfatase B from human placenta.</title>
        <authorList>
            <person name="Kobayashi T."/>
            <person name="Honke K."/>
            <person name="Jin T."/>
            <person name="Gasa S."/>
            <person name="Miyazaki T."/>
            <person name="Makita A."/>
        </authorList>
    </citation>
    <scope>PROTEIN SEQUENCE OF 41-55; 424-454 AND 466-483</scope>
    <source>
        <tissue>Placenta</tissue>
    </source>
</reference>
<reference key="10">
    <citation type="journal article" date="1995" name="Cell">
        <title>A novel amino acid modification in sulfatases that is defective in multiple sulfatase deficiency.</title>
        <authorList>
            <person name="Schmidt B."/>
            <person name="Selmer T."/>
            <person name="Ingendoh A."/>
            <person name="von Figura K."/>
        </authorList>
    </citation>
    <scope>OXOALANINE AT CYS-91</scope>
    <scope>IDENTIFICATION BY MASS SPECTROMETRY</scope>
    <scope>ABSENCE OF OXOALANINE IN MSD</scope>
</reference>
<reference key="11">
    <citation type="journal article" date="2004" name="Hum. Mutat.">
        <title>Molecular and functional analysis of SUMF1 mutations in multiple sulfatase deficiency.</title>
        <authorList>
            <person name="Cosma M.P."/>
            <person name="Pepe S."/>
            <person name="Parenti G."/>
            <person name="Settembre C."/>
            <person name="Annunziata I."/>
            <person name="Wade-Martins R."/>
            <person name="Domenico C.D."/>
            <person name="Natale P.D."/>
            <person name="Mankad A."/>
            <person name="Cox B."/>
            <person name="Uziel G."/>
            <person name="Mancini G.M."/>
            <person name="Zammarchi E."/>
            <person name="Donati M.A."/>
            <person name="Kleijer W.J."/>
            <person name="Filocamo M."/>
            <person name="Carrozzo R."/>
            <person name="Carella M."/>
            <person name="Ballabio A."/>
        </authorList>
    </citation>
    <scope>INVOLVEMENT IN MSD</scope>
</reference>
<reference key="12">
    <citation type="journal article" date="2009" name="Clin. Exp. Metastasis">
        <title>Arylsulfatase B regulates colonic epithelial cell migration by effects on MMP9 expression and RhoA activation.</title>
        <authorList>
            <person name="Bhattacharyya S."/>
            <person name="Tobacman J.K."/>
        </authorList>
    </citation>
    <scope>FUNCTION</scope>
</reference>
<reference key="13">
    <citation type="journal article" date="2009" name="J. Proteome Res.">
        <title>Glycoproteomics analysis of human liver tissue by combination of multiple enzyme digestion and hydrazide chemistry.</title>
        <authorList>
            <person name="Chen R."/>
            <person name="Jiang X."/>
            <person name="Sun D."/>
            <person name="Han G."/>
            <person name="Wang F."/>
            <person name="Ye M."/>
            <person name="Wang L."/>
            <person name="Zou H."/>
        </authorList>
    </citation>
    <scope>GLYCOSYLATION [LARGE SCALE ANALYSIS] AT ASN-366</scope>
    <source>
        <tissue>Liver</tissue>
    </source>
</reference>
<reference key="14">
    <citation type="journal article" date="2015" name="Proteomics">
        <title>N-terminome analysis of the human mitochondrial proteome.</title>
        <authorList>
            <person name="Vaca Jacome A.S."/>
            <person name="Rabilloud T."/>
            <person name="Schaeffer-Reiss C."/>
            <person name="Rompais M."/>
            <person name="Ayoub D."/>
            <person name="Lane L."/>
            <person name="Bairoch A."/>
            <person name="Van Dorsselaer A."/>
            <person name="Carapito C."/>
        </authorList>
    </citation>
    <scope>IDENTIFICATION BY MASS SPECTROMETRY [LARGE SCALE ANALYSIS]</scope>
</reference>
<reference key="15">
    <citation type="journal article" date="1997" name="Structure">
        <title>Structure of a human lysosomal sulfatase.</title>
        <authorList>
            <person name="Bond C.S."/>
            <person name="Clements P.R."/>
            <person name="Ashby S.J."/>
            <person name="Collyer C.A."/>
            <person name="Harrop S.J."/>
            <person name="Hopwood J.J."/>
            <person name="Guss J.M."/>
        </authorList>
    </citation>
    <scope>X-RAY CRYSTALLOGRAPHY (2.5 ANGSTROMS)</scope>
</reference>
<reference key="16">
    <citation type="journal article" date="1991" name="J. Biol. Chem.">
        <title>Mucopolysaccharidosis VI (Maroteaux-Lamy syndrome). An intermediate clinical phenotype caused by substitution of valine for glycine at position 137 of arylsulfatase B.</title>
        <authorList>
            <person name="Wicker G."/>
            <person name="Prill V."/>
            <person name="Brooks D.A."/>
            <person name="Gibson G.J."/>
            <person name="Hopwood J.J."/>
            <person name="von Figura K."/>
            <person name="Peters C."/>
        </authorList>
    </citation>
    <scope>VARIANT MPS6 VAL-137</scope>
    <scope>VARIANT MET-376</scope>
</reference>
<reference key="17">
    <citation type="journal article" date="1992" name="Am. J. Hum. Genet.">
        <title>Mucopolysaccharidosis type VI: identification of three mutations in the arylsulfatase B gene of patients with the severe and mild phenotypes provides molecular evidence for genetic heterogeneity.</title>
        <authorList>
            <person name="Jin W.-D."/>
            <person name="Jackson C.E."/>
            <person name="Desnick R.J."/>
            <person name="Schuchman E.H."/>
        </authorList>
    </citation>
    <scope>VARIANTS MPS6 ARG-117; PRO-236 AND TYR-405</scope>
</reference>
<reference key="18">
    <citation type="journal article" date="1994" name="Am. J. Hum. Genet.">
        <title>Mucopolysaccharidosis VI (Maroteaux-Lamy syndrome): six unique arylsulfatase B gene alleles causing variable disease phenotypes.</title>
        <authorList>
            <person name="Isbrandt D."/>
            <person name="Arlt G."/>
            <person name="Brooks D.A."/>
            <person name="Hopwood J.J."/>
            <person name="von Figura K."/>
            <person name="Peters C."/>
        </authorList>
    </citation>
    <scope>VARIANTS MPS6 ARG-144; ARG-192; PRO-321 AND TYR-521</scope>
    <scope>CHARACTERIZATION OF VARIANTS MPS6</scope>
</reference>
<reference key="19">
    <citation type="journal article" date="1994" name="Hum. Genet.">
        <title>Four novel mutant alleles of the arylsulfatase B gene in two patients with intermediate form of mucopolysaccharidosis VI (Maroteaux-Lamy syndrome).</title>
        <authorList>
            <person name="Voskoboeva E."/>
            <person name="Isbrandt D."/>
            <person name="von Figura K."/>
            <person name="Krasnopolskaya X."/>
            <person name="Peters C."/>
        </authorList>
    </citation>
    <scope>VARIANTS MPS6 TRP-152 AND GLN-160</scope>
</reference>
<reference key="20">
    <citation type="journal article" date="1995" name="Biochim. Biophys. Acta">
        <title>N-acetylgalactosamine-4-sulfatase: identification of four new mutations within the conserved sulfatase region causing mucopolysaccharidosis type VI.</title>
        <authorList>
            <person name="Simonaro C.M."/>
            <person name="Schuchman E.H."/>
        </authorList>
    </citation>
    <scope>VARIANTS MPS6 ILE-142; ARG-146; LEU-146 AND SER-146</scope>
</reference>
<reference key="21">
    <citation type="journal article" date="1996" name="Am. J. Hum. Genet.">
        <title>Identification, expression, and biochemical characterization of N-acetylgalactosamine-4-sulfatase mutations and relationship with clinical phenotype in MPS6 patients.</title>
        <authorList>
            <person name="Litjens T."/>
            <person name="Brooks D.A."/>
            <person name="Peters C."/>
            <person name="Gibson G.J."/>
            <person name="Hopwood J.J."/>
        </authorList>
    </citation>
    <scope>VARIANTS MPS6 MET-92; GLN-95; CYS-210; PRO-393 AND PRO-498</scope>
</reference>
<reference key="22">
    <citation type="journal article" date="1998" name="Hum. Mutat.">
        <title>Two novel mutations of the arylsulfatase B gene in two Italian patients with severe form of mucopolysaccharidosis.</title>
        <authorList>
            <person name="Villani G.R.D."/>
            <person name="Balzano N."/>
            <person name="Di Natale P."/>
        </authorList>
    </citation>
    <scope>VARIANT MPS-IV ARG-302</scope>
</reference>
<reference key="23">
    <citation type="journal article" date="1998" name="Science">
        <title>Large-scale identification, mapping, and genotyping of single-nucleotide polymorphisms in the human genome.</title>
        <authorList>
            <person name="Wang D.G."/>
            <person name="Fan J.-B."/>
            <person name="Siao C.-J."/>
            <person name="Berno A."/>
            <person name="Young P."/>
            <person name="Sapolsky R."/>
            <person name="Ghandour G."/>
            <person name="Perkins N."/>
            <person name="Winchester E."/>
            <person name="Spencer J."/>
            <person name="Kruglyak L."/>
            <person name="Stein L."/>
            <person name="Hsie L."/>
            <person name="Topaloglou T."/>
            <person name="Hubbell E."/>
            <person name="Robinson E."/>
            <person name="Mittmann M."/>
            <person name="Morris M.S."/>
            <person name="Shen N."/>
            <person name="Kilburn D."/>
            <person name="Rioux J."/>
            <person name="Nusbaum C."/>
            <person name="Rozen S."/>
            <person name="Hudson T.J."/>
            <person name="Lipshutz R."/>
            <person name="Chee M."/>
            <person name="Lander E.S."/>
        </authorList>
    </citation>
    <scope>VARIANT MET-358</scope>
</reference>
<reference key="24">
    <citation type="journal article" date="1999" name="Biochim. Biophys. Acta">
        <title>Maroteaux-Lamy syndrome: five novel mutations and their structural localization.</title>
        <authorList>
            <person name="Villani G.R.D."/>
            <person name="Balzano N."/>
            <person name="Vitale D."/>
            <person name="Saviano M."/>
            <person name="Pavone V."/>
            <person name="Di Natale P."/>
        </authorList>
    </citation>
    <scope>VARIANTS MPS6 PHE-65; HIS-116; GLN-315 AND ARG-531</scope>
    <scope>VARIANT MET-358</scope>
</reference>
<reference key="25">
    <citation type="journal article" date="2000" name="Hum. Mutat.">
        <title>A novel mutation (Q239R) identified in a Taiwan Chinese patient with type VI mucopolysaccharidosis (Maroteaux-Lamy syndrome).</title>
        <authorList>
            <person name="Wu J.-Y."/>
            <person name="Yang C.-F."/>
            <person name="Lee C.-C."/>
            <person name="Chang J.-G."/>
            <person name="Tsai F.-J."/>
        </authorList>
    </citation>
    <scope>VARIANTS MPS6 ARG-192 AND ARG-239</scope>
</reference>
<reference key="26">
    <citation type="journal article" date="2001" name="J. Formos. Med. Assoc.">
        <title>Mucopolysaccharidosis type VI: report of two Taiwanese patients and identification of one novel mutation.</title>
        <authorList>
            <person name="Yang C.-F."/>
            <person name="Wu J.-Y."/>
            <person name="Lin S.-P."/>
            <person name="Tsai F.-J."/>
        </authorList>
    </citation>
    <scope>VARIANTS MPS6 ARG-192; ARG-239 AND LEU-399</scope>
    <scope>VARIANT MET-358</scope>
</reference>
<reference key="27">
    <citation type="journal article" date="2004" name="Hum. Mutat.">
        <title>Mutational analysis of mucopolysaccharidosis type VI patients undergoing a trial of enzyme replacement therapy.</title>
        <authorList>
            <person name="Karageorgos L."/>
            <person name="Harmatz P."/>
            <person name="Simon J."/>
            <person name="Pollard A."/>
            <person name="Clements P.R."/>
            <person name="Brooks D.A."/>
            <person name="Hopwood J.J."/>
        </authorList>
    </citation>
    <scope>VARIANTS MPS6 TYR-86 DEL; CYS-210; PRO-236; CYS-312; GLN-315; PRO-321 AND GLY-484</scope>
    <scope>VARIANTS MET-358; MET-376 AND ASN-384</scope>
    <scope>CHARACTERIZATION OF VARIANTS MPS6 TYR-86 DEL AND CYS-312</scope>
</reference>
<reference key="28">
    <citation type="journal article" date="2009" name="Eur. J. Hum. Genet.">
        <title>Segregation analysis in a family at risk for the Maroteaux-Lamy syndrome conclusively reveals c.1151G&gt;A (p.S384N) as to be a polymorphism.</title>
        <authorList>
            <person name="Zanetti A."/>
            <person name="Ferraresi E."/>
            <person name="Picci L."/>
            <person name="Filocamo M."/>
            <person name="Parini R."/>
            <person name="Rosano C."/>
            <person name="Tomanin R."/>
            <person name="Scarpa M."/>
        </authorList>
    </citation>
    <scope>VARIANTS MPS6 ARG-82 AND GLN-315</scope>
    <scope>VARIANT ASN-384</scope>
</reference>